<proteinExistence type="inferred from homology"/>
<keyword id="KW-1185">Reference proteome</keyword>
<keyword id="KW-0687">Ribonucleoprotein</keyword>
<keyword id="KW-0689">Ribosomal protein</keyword>
<protein>
    <recommendedName>
        <fullName evidence="1">Small ribosomal subunit protein bS21</fullName>
    </recommendedName>
    <alternativeName>
        <fullName evidence="2">30S ribosomal protein S21</fullName>
    </alternativeName>
</protein>
<comment type="similarity">
    <text evidence="1">Belongs to the bacterial ribosomal protein bS21 family.</text>
</comment>
<reference key="1">
    <citation type="journal article" date="2006" name="Proc. Natl. Acad. Sci. U.S.A.">
        <title>Genome sequence of Synechococcus CC9311: insights into adaptation to a coastal environment.</title>
        <authorList>
            <person name="Palenik B."/>
            <person name="Ren Q."/>
            <person name="Dupont C.L."/>
            <person name="Myers G.S."/>
            <person name="Heidelberg J.F."/>
            <person name="Badger J.H."/>
            <person name="Madupu R."/>
            <person name="Nelson W.C."/>
            <person name="Brinkac L.M."/>
            <person name="Dodson R.J."/>
            <person name="Durkin A.S."/>
            <person name="Daugherty S.C."/>
            <person name="Sullivan S.A."/>
            <person name="Khouri H."/>
            <person name="Mohamoud Y."/>
            <person name="Halpin R."/>
            <person name="Paulsen I.T."/>
        </authorList>
    </citation>
    <scope>NUCLEOTIDE SEQUENCE [LARGE SCALE GENOMIC DNA]</scope>
    <source>
        <strain>CC9311</strain>
    </source>
</reference>
<accession>Q0I7A8</accession>
<gene>
    <name evidence="1" type="primary">rpsU</name>
    <name evidence="1" type="synonym">rps21</name>
    <name type="ordered locus">sync_2470</name>
</gene>
<sequence>MTQVTVGENEGIESALRRFKRQVSKAGIFADLKRLRHHETPIEKYKRKAQQRRRRR</sequence>
<name>RS21_SYNS3</name>
<dbReference type="EMBL" id="CP000435">
    <property type="protein sequence ID" value="ABI46975.1"/>
    <property type="molecule type" value="Genomic_DNA"/>
</dbReference>
<dbReference type="RefSeq" id="WP_006043142.1">
    <property type="nucleotide sequence ID" value="NC_008319.1"/>
</dbReference>
<dbReference type="SMR" id="Q0I7A8"/>
<dbReference type="STRING" id="64471.sync_2470"/>
<dbReference type="KEGG" id="syg:sync_2470"/>
<dbReference type="eggNOG" id="COG0828">
    <property type="taxonomic scope" value="Bacteria"/>
</dbReference>
<dbReference type="HOGENOM" id="CLU_159258_3_1_3"/>
<dbReference type="OrthoDB" id="9799244at2"/>
<dbReference type="Proteomes" id="UP000001961">
    <property type="component" value="Chromosome"/>
</dbReference>
<dbReference type="GO" id="GO:1990904">
    <property type="term" value="C:ribonucleoprotein complex"/>
    <property type="evidence" value="ECO:0007669"/>
    <property type="project" value="UniProtKB-KW"/>
</dbReference>
<dbReference type="GO" id="GO:0005840">
    <property type="term" value="C:ribosome"/>
    <property type="evidence" value="ECO:0007669"/>
    <property type="project" value="UniProtKB-KW"/>
</dbReference>
<dbReference type="GO" id="GO:0003735">
    <property type="term" value="F:structural constituent of ribosome"/>
    <property type="evidence" value="ECO:0007669"/>
    <property type="project" value="InterPro"/>
</dbReference>
<dbReference type="GO" id="GO:0006412">
    <property type="term" value="P:translation"/>
    <property type="evidence" value="ECO:0007669"/>
    <property type="project" value="UniProtKB-UniRule"/>
</dbReference>
<dbReference type="Gene3D" id="1.20.5.1150">
    <property type="entry name" value="Ribosomal protein S8"/>
    <property type="match status" value="1"/>
</dbReference>
<dbReference type="HAMAP" id="MF_00358">
    <property type="entry name" value="Ribosomal_bS21"/>
    <property type="match status" value="1"/>
</dbReference>
<dbReference type="InterPro" id="IPR001911">
    <property type="entry name" value="Ribosomal_bS21"/>
</dbReference>
<dbReference type="InterPro" id="IPR018278">
    <property type="entry name" value="Ribosomal_bS21_CS"/>
</dbReference>
<dbReference type="InterPro" id="IPR038380">
    <property type="entry name" value="Ribosomal_bS21_sf"/>
</dbReference>
<dbReference type="NCBIfam" id="TIGR00030">
    <property type="entry name" value="S21p"/>
    <property type="match status" value="1"/>
</dbReference>
<dbReference type="PANTHER" id="PTHR21109">
    <property type="entry name" value="MITOCHONDRIAL 28S RIBOSOMAL PROTEIN S21"/>
    <property type="match status" value="1"/>
</dbReference>
<dbReference type="PANTHER" id="PTHR21109:SF0">
    <property type="entry name" value="SMALL RIBOSOMAL SUBUNIT PROTEIN BS21M"/>
    <property type="match status" value="1"/>
</dbReference>
<dbReference type="Pfam" id="PF01165">
    <property type="entry name" value="Ribosomal_S21"/>
    <property type="match status" value="1"/>
</dbReference>
<dbReference type="PRINTS" id="PR00976">
    <property type="entry name" value="RIBOSOMALS21"/>
</dbReference>
<dbReference type="PROSITE" id="PS01181">
    <property type="entry name" value="RIBOSOMAL_S21"/>
    <property type="match status" value="1"/>
</dbReference>
<feature type="chain" id="PRO_0000266784" description="Small ribosomal subunit protein bS21">
    <location>
        <begin position="1"/>
        <end position="56"/>
    </location>
</feature>
<organism>
    <name type="scientific">Synechococcus sp. (strain CC9311)</name>
    <dbReference type="NCBI Taxonomy" id="64471"/>
    <lineage>
        <taxon>Bacteria</taxon>
        <taxon>Bacillati</taxon>
        <taxon>Cyanobacteriota</taxon>
        <taxon>Cyanophyceae</taxon>
        <taxon>Synechococcales</taxon>
        <taxon>Synechococcaceae</taxon>
        <taxon>Synechococcus</taxon>
    </lineage>
</organism>
<evidence type="ECO:0000255" key="1">
    <source>
        <dbReference type="HAMAP-Rule" id="MF_00358"/>
    </source>
</evidence>
<evidence type="ECO:0000305" key="2"/>